<reference key="1">
    <citation type="submission" date="2008-05" db="EMBL/GenBank/DDBJ databases">
        <title>Complete sequence of Rhodopseudomonas palustris TIE-1.</title>
        <authorList>
            <consortium name="US DOE Joint Genome Institute"/>
            <person name="Lucas S."/>
            <person name="Copeland A."/>
            <person name="Lapidus A."/>
            <person name="Glavina del Rio T."/>
            <person name="Dalin E."/>
            <person name="Tice H."/>
            <person name="Pitluck S."/>
            <person name="Chain P."/>
            <person name="Malfatti S."/>
            <person name="Shin M."/>
            <person name="Vergez L."/>
            <person name="Lang D."/>
            <person name="Schmutz J."/>
            <person name="Larimer F."/>
            <person name="Land M."/>
            <person name="Hauser L."/>
            <person name="Kyrpides N."/>
            <person name="Mikhailova N."/>
            <person name="Emerson D."/>
            <person name="Newman D.K."/>
            <person name="Roden E."/>
            <person name="Richardson P."/>
        </authorList>
    </citation>
    <scope>NUCLEOTIDE SEQUENCE [LARGE SCALE GENOMIC DNA]</scope>
    <source>
        <strain>TIE-1</strain>
    </source>
</reference>
<feature type="chain" id="PRO_1000129266" description="Trans-aconitate 2-methyltransferase">
    <location>
        <begin position="1"/>
        <end position="256"/>
    </location>
</feature>
<accession>B3QFV9</accession>
<protein>
    <recommendedName>
        <fullName evidence="1">Trans-aconitate 2-methyltransferase</fullName>
        <ecNumber evidence="1">2.1.1.144</ecNumber>
    </recommendedName>
</protein>
<keyword id="KW-0963">Cytoplasm</keyword>
<keyword id="KW-0489">Methyltransferase</keyword>
<keyword id="KW-0949">S-adenosyl-L-methionine</keyword>
<keyword id="KW-0808">Transferase</keyword>
<organism>
    <name type="scientific">Rhodopseudomonas palustris (strain TIE-1)</name>
    <dbReference type="NCBI Taxonomy" id="395960"/>
    <lineage>
        <taxon>Bacteria</taxon>
        <taxon>Pseudomonadati</taxon>
        <taxon>Pseudomonadota</taxon>
        <taxon>Alphaproteobacteria</taxon>
        <taxon>Hyphomicrobiales</taxon>
        <taxon>Nitrobacteraceae</taxon>
        <taxon>Rhodopseudomonas</taxon>
    </lineage>
</organism>
<sequence>MADWNAEQYLKFEDERTRPARDLLAQVPTTAPRKVADIGCGPGNSTALLVERWPEASVIGVDTSADMLRQARERLPQHKFIEANVAHWAPPAGTDVLFANAVFQWVPDHLKQLRRLLSGLDSGGVLAVQMPDNLDEPSHIMMREVALQEPWRHQLSKAAELRDTLPKPSVYYDALKPLCSRLEIWHTVYNHALDGPEAIVEWVKGTGLRPFIDPLELPERKTYLAAYTARIAAAYPAQADGQVLLRFPRIFIVAVK</sequence>
<evidence type="ECO:0000255" key="1">
    <source>
        <dbReference type="HAMAP-Rule" id="MF_00560"/>
    </source>
</evidence>
<comment type="function">
    <text evidence="1">Catalyzes the S-adenosylmethionine monomethyl esterification of trans-aconitate.</text>
</comment>
<comment type="catalytic activity">
    <reaction evidence="1">
        <text>trans-aconitate + S-adenosyl-L-methionine = (E)-3-(methoxycarbonyl)pent-2-enedioate + S-adenosyl-L-homocysteine</text>
        <dbReference type="Rhea" id="RHEA:14969"/>
        <dbReference type="ChEBI" id="CHEBI:15708"/>
        <dbReference type="ChEBI" id="CHEBI:57470"/>
        <dbReference type="ChEBI" id="CHEBI:57856"/>
        <dbReference type="ChEBI" id="CHEBI:59789"/>
        <dbReference type="EC" id="2.1.1.144"/>
    </reaction>
</comment>
<comment type="subcellular location">
    <subcellularLocation>
        <location evidence="1">Cytoplasm</location>
    </subcellularLocation>
</comment>
<comment type="similarity">
    <text evidence="1">Belongs to the methyltransferase superfamily. Tam family.</text>
</comment>
<dbReference type="EC" id="2.1.1.144" evidence="1"/>
<dbReference type="EMBL" id="CP001096">
    <property type="protein sequence ID" value="ACF02622.1"/>
    <property type="molecule type" value="Genomic_DNA"/>
</dbReference>
<dbReference type="RefSeq" id="WP_011159144.1">
    <property type="nucleotide sequence ID" value="NC_011004.1"/>
</dbReference>
<dbReference type="SMR" id="B3QFV9"/>
<dbReference type="GeneID" id="66894709"/>
<dbReference type="KEGG" id="rpt:Rpal_4126"/>
<dbReference type="HOGENOM" id="CLU_037990_5_2_5"/>
<dbReference type="OrthoDB" id="9795085at2"/>
<dbReference type="Proteomes" id="UP000001725">
    <property type="component" value="Chromosome"/>
</dbReference>
<dbReference type="GO" id="GO:0005737">
    <property type="term" value="C:cytoplasm"/>
    <property type="evidence" value="ECO:0007669"/>
    <property type="project" value="UniProtKB-SubCell"/>
</dbReference>
<dbReference type="GO" id="GO:0030798">
    <property type="term" value="F:trans-aconitate 2-methyltransferase activity"/>
    <property type="evidence" value="ECO:0007669"/>
    <property type="project" value="UniProtKB-UniRule"/>
</dbReference>
<dbReference type="GO" id="GO:0032259">
    <property type="term" value="P:methylation"/>
    <property type="evidence" value="ECO:0007669"/>
    <property type="project" value="UniProtKB-KW"/>
</dbReference>
<dbReference type="CDD" id="cd02440">
    <property type="entry name" value="AdoMet_MTases"/>
    <property type="match status" value="1"/>
</dbReference>
<dbReference type="Gene3D" id="1.10.150.290">
    <property type="entry name" value="S-adenosyl-L-methionine-dependent methyltransferases"/>
    <property type="match status" value="1"/>
</dbReference>
<dbReference type="Gene3D" id="3.40.50.150">
    <property type="entry name" value="Vaccinia Virus protein VP39"/>
    <property type="match status" value="1"/>
</dbReference>
<dbReference type="HAMAP" id="MF_00560">
    <property type="entry name" value="Tran_acon_Me_trans"/>
    <property type="match status" value="1"/>
</dbReference>
<dbReference type="InterPro" id="IPR041698">
    <property type="entry name" value="Methyltransf_25"/>
</dbReference>
<dbReference type="InterPro" id="IPR029063">
    <property type="entry name" value="SAM-dependent_MTases_sf"/>
</dbReference>
<dbReference type="InterPro" id="IPR023506">
    <property type="entry name" value="Trans-aconitate_MeTrfase"/>
</dbReference>
<dbReference type="InterPro" id="IPR023149">
    <property type="entry name" value="Trans_acon_MeTrfase_C"/>
</dbReference>
<dbReference type="NCBIfam" id="NF002463">
    <property type="entry name" value="PRK01683.1"/>
    <property type="match status" value="1"/>
</dbReference>
<dbReference type="PANTHER" id="PTHR43861:SF1">
    <property type="entry name" value="TRANS-ACONITATE 2-METHYLTRANSFERASE"/>
    <property type="match status" value="1"/>
</dbReference>
<dbReference type="PANTHER" id="PTHR43861">
    <property type="entry name" value="TRANS-ACONITATE 2-METHYLTRANSFERASE-RELATED"/>
    <property type="match status" value="1"/>
</dbReference>
<dbReference type="Pfam" id="PF13649">
    <property type="entry name" value="Methyltransf_25"/>
    <property type="match status" value="1"/>
</dbReference>
<dbReference type="SUPFAM" id="SSF53335">
    <property type="entry name" value="S-adenosyl-L-methionine-dependent methyltransferases"/>
    <property type="match status" value="1"/>
</dbReference>
<gene>
    <name evidence="1" type="primary">tam</name>
    <name type="ordered locus">Rpal_4126</name>
</gene>
<name>TAM_RHOPT</name>
<proteinExistence type="inferred from homology"/>